<keyword id="KW-0050">Antiport</keyword>
<keyword id="KW-1003">Cell membrane</keyword>
<keyword id="KW-0406">Ion transport</keyword>
<keyword id="KW-0472">Membrane</keyword>
<keyword id="KW-1185">Reference proteome</keyword>
<keyword id="KW-0812">Transmembrane</keyword>
<keyword id="KW-1133">Transmembrane helix</keyword>
<keyword id="KW-0813">Transport</keyword>
<gene>
    <name type="primary">norM</name>
    <name type="ordered locus">TM_0815</name>
</gene>
<name>NORM_THEMA</name>
<proteinExistence type="inferred from homology"/>
<evidence type="ECO:0000250" key="1"/>
<evidence type="ECO:0000255" key="2"/>
<evidence type="ECO:0000305" key="3"/>
<dbReference type="EMBL" id="AE000512">
    <property type="protein sequence ID" value="AAD35897.1"/>
    <property type="molecule type" value="Genomic_DNA"/>
</dbReference>
<dbReference type="PIR" id="H72331">
    <property type="entry name" value="H72331"/>
</dbReference>
<dbReference type="RefSeq" id="NP_228624.1">
    <property type="nucleotide sequence ID" value="NC_000853.1"/>
</dbReference>
<dbReference type="RefSeq" id="WP_010865209.1">
    <property type="nucleotide sequence ID" value="NC_000853.1"/>
</dbReference>
<dbReference type="SMR" id="Q9WZS2"/>
<dbReference type="FunCoup" id="Q9WZS2">
    <property type="interactions" value="38"/>
</dbReference>
<dbReference type="STRING" id="243274.TM_0815"/>
<dbReference type="TCDB" id="2.A.66.1.28">
    <property type="family name" value="the multidrug/oligosaccharidyl-lipid/polysaccharide (mop) flippase superfamily"/>
</dbReference>
<dbReference type="PaxDb" id="243274-THEMA_00575"/>
<dbReference type="DNASU" id="898483"/>
<dbReference type="EnsemblBacteria" id="AAD35897">
    <property type="protein sequence ID" value="AAD35897"/>
    <property type="gene ID" value="TM_0815"/>
</dbReference>
<dbReference type="KEGG" id="tma:TM0815"/>
<dbReference type="KEGG" id="tmi:THEMA_00575"/>
<dbReference type="KEGG" id="tmw:THMA_0834"/>
<dbReference type="PATRIC" id="fig|243274.18.peg.112"/>
<dbReference type="eggNOG" id="COG0534">
    <property type="taxonomic scope" value="Bacteria"/>
</dbReference>
<dbReference type="InParanoid" id="Q9WZS2"/>
<dbReference type="OrthoDB" id="9776324at2"/>
<dbReference type="Proteomes" id="UP000008183">
    <property type="component" value="Chromosome"/>
</dbReference>
<dbReference type="GO" id="GO:0005886">
    <property type="term" value="C:plasma membrane"/>
    <property type="evidence" value="ECO:0007669"/>
    <property type="project" value="UniProtKB-SubCell"/>
</dbReference>
<dbReference type="GO" id="GO:0015297">
    <property type="term" value="F:antiporter activity"/>
    <property type="evidence" value="ECO:0007669"/>
    <property type="project" value="UniProtKB-KW"/>
</dbReference>
<dbReference type="GO" id="GO:0042910">
    <property type="term" value="F:xenobiotic transmembrane transporter activity"/>
    <property type="evidence" value="ECO:0007669"/>
    <property type="project" value="InterPro"/>
</dbReference>
<dbReference type="GO" id="GO:0006811">
    <property type="term" value="P:monoatomic ion transport"/>
    <property type="evidence" value="ECO:0007669"/>
    <property type="project" value="UniProtKB-KW"/>
</dbReference>
<dbReference type="CDD" id="cd13137">
    <property type="entry name" value="MATE_NorM_like"/>
    <property type="match status" value="1"/>
</dbReference>
<dbReference type="InterPro" id="IPR002528">
    <property type="entry name" value="MATE_fam"/>
</dbReference>
<dbReference type="InterPro" id="IPR050222">
    <property type="entry name" value="MATE_MdtK"/>
</dbReference>
<dbReference type="InterPro" id="IPR048279">
    <property type="entry name" value="MdtK-like"/>
</dbReference>
<dbReference type="NCBIfam" id="TIGR00797">
    <property type="entry name" value="matE"/>
    <property type="match status" value="1"/>
</dbReference>
<dbReference type="PANTHER" id="PTHR43298:SF2">
    <property type="entry name" value="FMN_FAD EXPORTER YEEO-RELATED"/>
    <property type="match status" value="1"/>
</dbReference>
<dbReference type="PANTHER" id="PTHR43298">
    <property type="entry name" value="MULTIDRUG RESISTANCE PROTEIN NORM-RELATED"/>
    <property type="match status" value="1"/>
</dbReference>
<dbReference type="Pfam" id="PF01554">
    <property type="entry name" value="MatE"/>
    <property type="match status" value="2"/>
</dbReference>
<dbReference type="PIRSF" id="PIRSF006603">
    <property type="entry name" value="DinF"/>
    <property type="match status" value="1"/>
</dbReference>
<sequence length="464" mass="51054">MRYSLFKNYLPKEEVPEIRKELIKLALPAMGENVLQMLFGMADTAFLGHYSWKAMSGVGLSNQVFWVVQVVLIAASMGATVTIANAIGAGNRKAVRSLAWNSVFLAIFTGVILTALTPLSDVLINIFPNLEGEIESSAKEYLKVILSGSMGFSIMAVFSAMLRGAGDTRTPMIVTGLTNFLNIFLDYAMIFGKFGFPEMGVRGAAVATILSRFVGAGILTYVIFKREEFQLRKGLVPPKWSSQKEILRVGFPTAIENFVFSTGVLMFANILLIAGAEAYAGHRIGINVESLSFMPAFGISVAITTLVGRYNGMGNKEHVLGVIRQGWILSLLFQVTVGIIIFLFPEPLIRIFTSDPQIIEISKLPVKIIGLFQFFLAIDSTMNGALRGTGNTLPPMIITFISIWTARLPVAFVMVKYFQLGLLGAWIGMIADIIFRSTLKLLFFLSGKWEKRAVLTRERVKELG</sequence>
<protein>
    <recommendedName>
        <fullName>Probable multidrug resistance protein NorM</fullName>
    </recommendedName>
    <alternativeName>
        <fullName>Multidrug-efflux transporter</fullName>
    </alternativeName>
</protein>
<feature type="chain" id="PRO_0000164243" description="Probable multidrug resistance protein NorM">
    <location>
        <begin position="1"/>
        <end position="464"/>
    </location>
</feature>
<feature type="transmembrane region" description="Helical" evidence="2">
    <location>
        <begin position="22"/>
        <end position="42"/>
    </location>
</feature>
<feature type="transmembrane region" description="Helical" evidence="2">
    <location>
        <begin position="64"/>
        <end position="84"/>
    </location>
</feature>
<feature type="transmembrane region" description="Helical" evidence="2">
    <location>
        <begin position="104"/>
        <end position="124"/>
    </location>
</feature>
<feature type="transmembrane region" description="Helical" evidence="2">
    <location>
        <begin position="142"/>
        <end position="162"/>
    </location>
</feature>
<feature type="transmembrane region" description="Helical" evidence="2">
    <location>
        <begin position="172"/>
        <end position="192"/>
    </location>
</feature>
<feature type="transmembrane region" description="Helical" evidence="2">
    <location>
        <begin position="204"/>
        <end position="224"/>
    </location>
</feature>
<feature type="transmembrane region" description="Helical" evidence="2">
    <location>
        <begin position="258"/>
        <end position="278"/>
    </location>
</feature>
<feature type="transmembrane region" description="Helical" evidence="2">
    <location>
        <begin position="288"/>
        <end position="308"/>
    </location>
</feature>
<feature type="transmembrane region" description="Helical" evidence="2">
    <location>
        <begin position="326"/>
        <end position="346"/>
    </location>
</feature>
<feature type="transmembrane region" description="Helical" evidence="2">
    <location>
        <begin position="358"/>
        <end position="378"/>
    </location>
</feature>
<feature type="transmembrane region" description="Helical" evidence="2">
    <location>
        <begin position="384"/>
        <end position="404"/>
    </location>
</feature>
<feature type="transmembrane region" description="Helical" evidence="2">
    <location>
        <begin position="410"/>
        <end position="430"/>
    </location>
</feature>
<reference key="1">
    <citation type="journal article" date="1999" name="Nature">
        <title>Evidence for lateral gene transfer between Archaea and Bacteria from genome sequence of Thermotoga maritima.</title>
        <authorList>
            <person name="Nelson K.E."/>
            <person name="Clayton R.A."/>
            <person name="Gill S.R."/>
            <person name="Gwinn M.L."/>
            <person name="Dodson R.J."/>
            <person name="Haft D.H."/>
            <person name="Hickey E.K."/>
            <person name="Peterson J.D."/>
            <person name="Nelson W.C."/>
            <person name="Ketchum K.A."/>
            <person name="McDonald L.A."/>
            <person name="Utterback T.R."/>
            <person name="Malek J.A."/>
            <person name="Linher K.D."/>
            <person name="Garrett M.M."/>
            <person name="Stewart A.M."/>
            <person name="Cotton M.D."/>
            <person name="Pratt M.S."/>
            <person name="Phillips C.A."/>
            <person name="Richardson D.L."/>
            <person name="Heidelberg J.F."/>
            <person name="Sutton G.G."/>
            <person name="Fleischmann R.D."/>
            <person name="Eisen J.A."/>
            <person name="White O."/>
            <person name="Salzberg S.L."/>
            <person name="Smith H.O."/>
            <person name="Venter J.C."/>
            <person name="Fraser C.M."/>
        </authorList>
    </citation>
    <scope>NUCLEOTIDE SEQUENCE [LARGE SCALE GENOMIC DNA]</scope>
    <source>
        <strain>ATCC 43589 / DSM 3109 / JCM 10099 / NBRC 100826 / MSB8</strain>
    </source>
</reference>
<comment type="function">
    <text evidence="1">Multidrug efflux pump.</text>
</comment>
<comment type="subcellular location">
    <subcellularLocation>
        <location evidence="1">Cell membrane</location>
        <topology evidence="1">Multi-pass membrane protein</topology>
    </subcellularLocation>
</comment>
<comment type="similarity">
    <text evidence="3">Belongs to the multi antimicrobial extrusion (MATE) (TC 2.A.66.1) family.</text>
</comment>
<accession>Q9WZS2</accession>
<organism>
    <name type="scientific">Thermotoga maritima (strain ATCC 43589 / DSM 3109 / JCM 10099 / NBRC 100826 / MSB8)</name>
    <dbReference type="NCBI Taxonomy" id="243274"/>
    <lineage>
        <taxon>Bacteria</taxon>
        <taxon>Thermotogati</taxon>
        <taxon>Thermotogota</taxon>
        <taxon>Thermotogae</taxon>
        <taxon>Thermotogales</taxon>
        <taxon>Thermotogaceae</taxon>
        <taxon>Thermotoga</taxon>
    </lineage>
</organism>